<accession>P30809</accession>
<dbReference type="EC" id="3.1.1.59"/>
<dbReference type="PIR" id="S29655">
    <property type="entry name" value="S29655"/>
</dbReference>
<dbReference type="BindingDB" id="P30809"/>
<dbReference type="ChEMBL" id="CHEMBL2366569"/>
<dbReference type="InParanoid" id="P30809"/>
<dbReference type="Proteomes" id="UP000322000">
    <property type="component" value="Unplaced"/>
</dbReference>
<dbReference type="GO" id="GO:0004453">
    <property type="term" value="F:juvenile-hormone esterase activity"/>
    <property type="evidence" value="ECO:0007669"/>
    <property type="project" value="UniProtKB-EC"/>
</dbReference>
<evidence type="ECO:0000250" key="1">
    <source>
        <dbReference type="UniProtKB" id="P19985"/>
    </source>
</evidence>
<evidence type="ECO:0000305" key="2"/>
<name>JHEA_TRINI</name>
<organism>
    <name type="scientific">Trichoplusia ni</name>
    <name type="common">Cabbage looper</name>
    <dbReference type="NCBI Taxonomy" id="7111"/>
    <lineage>
        <taxon>Eukaryota</taxon>
        <taxon>Metazoa</taxon>
        <taxon>Ecdysozoa</taxon>
        <taxon>Arthropoda</taxon>
        <taxon>Hexapoda</taxon>
        <taxon>Insecta</taxon>
        <taxon>Pterygota</taxon>
        <taxon>Neoptera</taxon>
        <taxon>Endopterygota</taxon>
        <taxon>Lepidoptera</taxon>
        <taxon>Glossata</taxon>
        <taxon>Ditrysia</taxon>
        <taxon>Noctuoidea</taxon>
        <taxon>Noctuidae</taxon>
        <taxon>Plusiinae</taxon>
        <taxon>Trichoplusia</taxon>
    </lineage>
</organism>
<comment type="function">
    <text evidence="1">JH esterase plays a crucial role in the decrease of JH activity in lepidopteran insects, by hydrolyzing the methyl ester of JH. It is also involved in the transport of JH.</text>
</comment>
<comment type="catalytic activity">
    <reaction evidence="1">
        <text>juvenile hormone I + H2O = juvenile hormone I carboxylate + methanol + H(+)</text>
        <dbReference type="Rhea" id="RHEA:46916"/>
        <dbReference type="ChEBI" id="CHEBI:15377"/>
        <dbReference type="ChEBI" id="CHEBI:15378"/>
        <dbReference type="ChEBI" id="CHEBI:17790"/>
        <dbReference type="ChEBI" id="CHEBI:83641"/>
        <dbReference type="ChEBI" id="CHEBI:87109"/>
        <dbReference type="EC" id="3.1.1.59"/>
    </reaction>
</comment>
<comment type="catalytic activity">
    <reaction evidence="1">
        <text>juvenile hormone III + H2O = juvenile hormone III carboxylate + methanol + H(+)</text>
        <dbReference type="Rhea" id="RHEA:46912"/>
        <dbReference type="ChEBI" id="CHEBI:15377"/>
        <dbReference type="ChEBI" id="CHEBI:15378"/>
        <dbReference type="ChEBI" id="CHEBI:17790"/>
        <dbReference type="ChEBI" id="CHEBI:27493"/>
        <dbReference type="ChEBI" id="CHEBI:83274"/>
        <dbReference type="EC" id="3.1.1.59"/>
    </reaction>
</comment>
<comment type="tissue specificity">
    <text>Fat body, the site of their biosynthesis, and the hemolymph where it is secreted.</text>
</comment>
<comment type="similarity">
    <text evidence="2">Belongs to the type-B carboxylesterase/lipase family.</text>
</comment>
<protein>
    <recommendedName>
        <fullName>Juvenile hormone esterase, isoform A</fullName>
        <shortName>JH esterase</shortName>
        <shortName>JHE-A</shortName>
        <ecNumber>3.1.1.59</ecNumber>
    </recommendedName>
</protein>
<keyword id="KW-0903">Direct protein sequencing</keyword>
<keyword id="KW-0378">Hydrolase</keyword>
<keyword id="KW-1185">Reference proteome</keyword>
<keyword id="KW-0719">Serine esterase</keyword>
<sequence>LPSLSADAEAPSPLSLKADAPLAHIDSGLLGVPYAKQPIGELRVTTLRLIELPPEKLVVGAPVYLYQFSYESPSSAIKQEVVGHIEDLTYVFKGSQYQDIESPTAYQSK</sequence>
<reference key="1">
    <citation type="journal article" date="1993" name="Biochim. Biophys. Acta">
        <title>Characterization of two major isoforms of juvenile hormone esterase from Trichoplusia ni (Lepidoptera).</title>
        <authorList>
            <person name="Jones G."/>
            <person name="Manczak M."/>
            <person name="Wozniak M."/>
            <person name="Ko'Rrati R."/>
        </authorList>
    </citation>
    <scope>PROTEIN SEQUENCE</scope>
</reference>
<proteinExistence type="evidence at protein level"/>
<feature type="chain" id="PRO_0000070292" description="Juvenile hormone esterase, isoform A">
    <location>
        <begin position="1"/>
        <end position="109" status="greater than"/>
    </location>
</feature>
<feature type="non-consecutive residues" evidence="2">
    <location>
        <begin position="30"/>
        <end position="31"/>
    </location>
</feature>
<feature type="non-consecutive residues" evidence="2">
    <location>
        <begin position="43"/>
        <end position="44"/>
    </location>
</feature>
<feature type="non-consecutive residues" evidence="2">
    <location>
        <begin position="48"/>
        <end position="49"/>
    </location>
</feature>
<feature type="non-consecutive residues" evidence="2">
    <location>
        <begin position="57"/>
        <end position="58"/>
    </location>
</feature>
<feature type="non-consecutive residues" evidence="2">
    <location>
        <begin position="80"/>
        <end position="81"/>
    </location>
</feature>
<feature type="non-consecutive residues" evidence="2">
    <location>
        <begin position="93"/>
        <end position="94"/>
    </location>
</feature>
<feature type="non-terminal residue">
    <location>
        <position position="109"/>
    </location>
</feature>